<evidence type="ECO:0000255" key="1"/>
<evidence type="ECO:0000255" key="2">
    <source>
        <dbReference type="PROSITE-ProRule" id="PRU00521"/>
    </source>
</evidence>
<evidence type="ECO:0000269" key="3">
    <source>
    </source>
</evidence>
<evidence type="ECO:0000269" key="4">
    <source ref="2"/>
</evidence>
<evidence type="ECO:0000305" key="5"/>
<gene>
    <name type="primary">OR2T5</name>
</gene>
<reference key="1">
    <citation type="journal article" date="2006" name="Nature">
        <title>The DNA sequence and biological annotation of human chromosome 1.</title>
        <authorList>
            <person name="Gregory S.G."/>
            <person name="Barlow K.F."/>
            <person name="McLay K.E."/>
            <person name="Kaul R."/>
            <person name="Swarbreck D."/>
            <person name="Dunham A."/>
            <person name="Scott C.E."/>
            <person name="Howe K.L."/>
            <person name="Woodfine K."/>
            <person name="Spencer C.C.A."/>
            <person name="Jones M.C."/>
            <person name="Gillson C."/>
            <person name="Searle S."/>
            <person name="Zhou Y."/>
            <person name="Kokocinski F."/>
            <person name="McDonald L."/>
            <person name="Evans R."/>
            <person name="Phillips K."/>
            <person name="Atkinson A."/>
            <person name="Cooper R."/>
            <person name="Jones C."/>
            <person name="Hall R.E."/>
            <person name="Andrews T.D."/>
            <person name="Lloyd C."/>
            <person name="Ainscough R."/>
            <person name="Almeida J.P."/>
            <person name="Ambrose K.D."/>
            <person name="Anderson F."/>
            <person name="Andrew R.W."/>
            <person name="Ashwell R.I.S."/>
            <person name="Aubin K."/>
            <person name="Babbage A.K."/>
            <person name="Bagguley C.L."/>
            <person name="Bailey J."/>
            <person name="Beasley H."/>
            <person name="Bethel G."/>
            <person name="Bird C.P."/>
            <person name="Bray-Allen S."/>
            <person name="Brown J.Y."/>
            <person name="Brown A.J."/>
            <person name="Buckley D."/>
            <person name="Burton J."/>
            <person name="Bye J."/>
            <person name="Carder C."/>
            <person name="Chapman J.C."/>
            <person name="Clark S.Y."/>
            <person name="Clarke G."/>
            <person name="Clee C."/>
            <person name="Cobley V."/>
            <person name="Collier R.E."/>
            <person name="Corby N."/>
            <person name="Coville G.J."/>
            <person name="Davies J."/>
            <person name="Deadman R."/>
            <person name="Dunn M."/>
            <person name="Earthrowl M."/>
            <person name="Ellington A.G."/>
            <person name="Errington H."/>
            <person name="Frankish A."/>
            <person name="Frankland J."/>
            <person name="French L."/>
            <person name="Garner P."/>
            <person name="Garnett J."/>
            <person name="Gay L."/>
            <person name="Ghori M.R.J."/>
            <person name="Gibson R."/>
            <person name="Gilby L.M."/>
            <person name="Gillett W."/>
            <person name="Glithero R.J."/>
            <person name="Grafham D.V."/>
            <person name="Griffiths C."/>
            <person name="Griffiths-Jones S."/>
            <person name="Grocock R."/>
            <person name="Hammond S."/>
            <person name="Harrison E.S.I."/>
            <person name="Hart E."/>
            <person name="Haugen E."/>
            <person name="Heath P.D."/>
            <person name="Holmes S."/>
            <person name="Holt K."/>
            <person name="Howden P.J."/>
            <person name="Hunt A.R."/>
            <person name="Hunt S.E."/>
            <person name="Hunter G."/>
            <person name="Isherwood J."/>
            <person name="James R."/>
            <person name="Johnson C."/>
            <person name="Johnson D."/>
            <person name="Joy A."/>
            <person name="Kay M."/>
            <person name="Kershaw J.K."/>
            <person name="Kibukawa M."/>
            <person name="Kimberley A.M."/>
            <person name="King A."/>
            <person name="Knights A.J."/>
            <person name="Lad H."/>
            <person name="Laird G."/>
            <person name="Lawlor S."/>
            <person name="Leongamornlert D.A."/>
            <person name="Lloyd D.M."/>
            <person name="Loveland J."/>
            <person name="Lovell J."/>
            <person name="Lush M.J."/>
            <person name="Lyne R."/>
            <person name="Martin S."/>
            <person name="Mashreghi-Mohammadi M."/>
            <person name="Matthews L."/>
            <person name="Matthews N.S.W."/>
            <person name="McLaren S."/>
            <person name="Milne S."/>
            <person name="Mistry S."/>
            <person name="Moore M.J.F."/>
            <person name="Nickerson T."/>
            <person name="O'Dell C.N."/>
            <person name="Oliver K."/>
            <person name="Palmeiri A."/>
            <person name="Palmer S.A."/>
            <person name="Parker A."/>
            <person name="Patel D."/>
            <person name="Pearce A.V."/>
            <person name="Peck A.I."/>
            <person name="Pelan S."/>
            <person name="Phelps K."/>
            <person name="Phillimore B.J."/>
            <person name="Plumb R."/>
            <person name="Rajan J."/>
            <person name="Raymond C."/>
            <person name="Rouse G."/>
            <person name="Saenphimmachak C."/>
            <person name="Sehra H.K."/>
            <person name="Sheridan E."/>
            <person name="Shownkeen R."/>
            <person name="Sims S."/>
            <person name="Skuce C.D."/>
            <person name="Smith M."/>
            <person name="Steward C."/>
            <person name="Subramanian S."/>
            <person name="Sycamore N."/>
            <person name="Tracey A."/>
            <person name="Tromans A."/>
            <person name="Van Helmond Z."/>
            <person name="Wall M."/>
            <person name="Wallis J.M."/>
            <person name="White S."/>
            <person name="Whitehead S.L."/>
            <person name="Wilkinson J.E."/>
            <person name="Willey D.L."/>
            <person name="Williams H."/>
            <person name="Wilming L."/>
            <person name="Wray P.W."/>
            <person name="Wu Z."/>
            <person name="Coulson A."/>
            <person name="Vaudin M."/>
            <person name="Sulston J.E."/>
            <person name="Durbin R.M."/>
            <person name="Hubbard T."/>
            <person name="Wooster R."/>
            <person name="Dunham I."/>
            <person name="Carter N.P."/>
            <person name="McVean G."/>
            <person name="Ross M.T."/>
            <person name="Harrow J."/>
            <person name="Olson M.V."/>
            <person name="Beck S."/>
            <person name="Rogers J."/>
            <person name="Bentley D.R."/>
        </authorList>
    </citation>
    <scope>NUCLEOTIDE SEQUENCE [LARGE SCALE GENOMIC DNA]</scope>
</reference>
<reference key="2">
    <citation type="submission" date="2005-09" db="EMBL/GenBank/DDBJ databases">
        <authorList>
            <person name="Mural R.J."/>
            <person name="Istrail S."/>
            <person name="Sutton G.G."/>
            <person name="Florea L."/>
            <person name="Halpern A.L."/>
            <person name="Mobarry C.M."/>
            <person name="Lippert R."/>
            <person name="Walenz B."/>
            <person name="Shatkay H."/>
            <person name="Dew I."/>
            <person name="Miller J.R."/>
            <person name="Flanigan M.J."/>
            <person name="Edwards N.J."/>
            <person name="Bolanos R."/>
            <person name="Fasulo D."/>
            <person name="Halldorsson B.V."/>
            <person name="Hannenhalli S."/>
            <person name="Turner R."/>
            <person name="Yooseph S."/>
            <person name="Lu F."/>
            <person name="Nusskern D.R."/>
            <person name="Shue B.C."/>
            <person name="Zheng X.H."/>
            <person name="Zhong F."/>
            <person name="Delcher A.L."/>
            <person name="Huson D.H."/>
            <person name="Kravitz S.A."/>
            <person name="Mouchard L."/>
            <person name="Reinert K."/>
            <person name="Remington K.A."/>
            <person name="Clark A.G."/>
            <person name="Waterman M.S."/>
            <person name="Eichler E.E."/>
            <person name="Adams M.D."/>
            <person name="Hunkapiller M.W."/>
            <person name="Myers E.W."/>
            <person name="Venter J.C."/>
        </authorList>
    </citation>
    <scope>NUCLEOTIDE SEQUENCE [LARGE SCALE GENOMIC DNA]</scope>
    <scope>VARIANT ARG-13</scope>
</reference>
<reference key="3">
    <citation type="journal article" date="2004" name="Genome Res.">
        <title>The status, quality, and expansion of the NIH full-length cDNA project: the Mammalian Gene Collection (MGC).</title>
        <authorList>
            <consortium name="The MGC Project Team"/>
        </authorList>
    </citation>
    <scope>NUCLEOTIDE SEQUENCE [LARGE SCALE MRNA]</scope>
    <scope>VARIANT ARG-13</scope>
</reference>
<reference key="4">
    <citation type="journal article" date="2004" name="Proc. Natl. Acad. Sci. U.S.A.">
        <title>The human olfactory receptor gene family.</title>
        <authorList>
            <person name="Malnic B."/>
            <person name="Godfrey P.A."/>
            <person name="Buck L.B."/>
        </authorList>
    </citation>
    <scope>IDENTIFICATION</scope>
</reference>
<reference key="5">
    <citation type="journal article" date="2004" name="Proc. Natl. Acad. Sci. U.S.A.">
        <authorList>
            <person name="Malnic B."/>
            <person name="Godfrey P.A."/>
            <person name="Buck L.B."/>
        </authorList>
    </citation>
    <scope>ERRATUM OF PUBMED:14983052</scope>
</reference>
<comment type="function">
    <text evidence="5">Odorant receptor.</text>
</comment>
<comment type="subcellular location">
    <subcellularLocation>
        <location>Cell membrane</location>
        <topology>Multi-pass membrane protein</topology>
    </subcellularLocation>
</comment>
<comment type="similarity">
    <text evidence="2">Belongs to the G-protein coupled receptor 1 family.</text>
</comment>
<comment type="online information" name="Human Olfactory Receptor Data Exploratorium (HORDE)">
    <link uri="http://genome.weizmann.ac.il/horde/card/index/symbol:OR2T5"/>
</comment>
<dbReference type="EMBL" id="AC138089">
    <property type="status" value="NOT_ANNOTATED_CDS"/>
    <property type="molecule type" value="Genomic_DNA"/>
</dbReference>
<dbReference type="EMBL" id="CH471148">
    <property type="protein sequence ID" value="EAW77230.1"/>
    <property type="molecule type" value="Genomic_DNA"/>
</dbReference>
<dbReference type="EMBL" id="BC140747">
    <property type="protein sequence ID" value="AAI40748.1"/>
    <property type="molecule type" value="mRNA"/>
</dbReference>
<dbReference type="EMBL" id="BC140915">
    <property type="protein sequence ID" value="AAI40916.1"/>
    <property type="molecule type" value="mRNA"/>
</dbReference>
<dbReference type="EMBL" id="BK004465">
    <property type="protein sequence ID" value="DAA04863.1"/>
    <property type="molecule type" value="Genomic_DNA"/>
</dbReference>
<dbReference type="CCDS" id="CCDS31118.1"/>
<dbReference type="RefSeq" id="NP_001004697.1">
    <property type="nucleotide sequence ID" value="NM_001004697.2"/>
</dbReference>
<dbReference type="SMR" id="Q6IEZ7"/>
<dbReference type="BioGRID" id="135301">
    <property type="interactions" value="1"/>
</dbReference>
<dbReference type="FunCoup" id="Q6IEZ7">
    <property type="interactions" value="510"/>
</dbReference>
<dbReference type="STRING" id="9606.ENSP00000493066"/>
<dbReference type="GlyCosmos" id="Q6IEZ7">
    <property type="glycosylation" value="2 sites, No reported glycans"/>
</dbReference>
<dbReference type="GlyGen" id="Q6IEZ7">
    <property type="glycosylation" value="2 sites"/>
</dbReference>
<dbReference type="iPTMnet" id="Q6IEZ7"/>
<dbReference type="PhosphoSitePlus" id="Q6IEZ7"/>
<dbReference type="BioMuta" id="OR2T5"/>
<dbReference type="DMDM" id="74762308"/>
<dbReference type="MassIVE" id="Q6IEZ7"/>
<dbReference type="PaxDb" id="9606-ENSP00000355429"/>
<dbReference type="PeptideAtlas" id="Q6IEZ7"/>
<dbReference type="Antibodypedia" id="34758">
    <property type="antibodies" value="74 antibodies from 15 providers"/>
</dbReference>
<dbReference type="DNASU" id="401993"/>
<dbReference type="Ensembl" id="ENST00000611272.2">
    <property type="protein sequence ID" value="ENSP00000480545.1"/>
    <property type="gene ID" value="ENSG00000273827.2"/>
</dbReference>
<dbReference type="Ensembl" id="ENST00000620813.2">
    <property type="protein sequence ID" value="ENSP00000480714.1"/>
    <property type="gene ID" value="ENSG00000275102.2"/>
</dbReference>
<dbReference type="Ensembl" id="ENST00000641363.1">
    <property type="protein sequence ID" value="ENSP00000493066.1"/>
    <property type="gene ID" value="ENSG00000203661.4"/>
</dbReference>
<dbReference type="Ensembl" id="ENST00000709563.1">
    <property type="protein sequence ID" value="ENSP00000517764.1"/>
    <property type="gene ID" value="ENSG00000292007.1"/>
</dbReference>
<dbReference type="GeneID" id="401993"/>
<dbReference type="KEGG" id="hsa:401993"/>
<dbReference type="MANE-Select" id="ENST00000641363.1">
    <property type="protein sequence ID" value="ENSP00000493066.1"/>
    <property type="RefSeq nucleotide sequence ID" value="NM_001004697.2"/>
    <property type="RefSeq protein sequence ID" value="NP_001004697.1"/>
</dbReference>
<dbReference type="UCSC" id="uc001iem.1">
    <property type="organism name" value="human"/>
</dbReference>
<dbReference type="AGR" id="HGNC:15017"/>
<dbReference type="CTD" id="401993"/>
<dbReference type="GeneCards" id="OR2T5"/>
<dbReference type="HGNC" id="HGNC:15017">
    <property type="gene designation" value="OR2T5"/>
</dbReference>
<dbReference type="HPA" id="ENSG00000203661">
    <property type="expression patterns" value="Not detected"/>
</dbReference>
<dbReference type="neXtProt" id="NX_Q6IEZ7"/>
<dbReference type="PharmGKB" id="PA32205"/>
<dbReference type="VEuPathDB" id="HostDB:ENSG00000203661"/>
<dbReference type="eggNOG" id="ENOG502T92P">
    <property type="taxonomic scope" value="Eukaryota"/>
</dbReference>
<dbReference type="GeneTree" id="ENSGT01130000278260"/>
<dbReference type="HOGENOM" id="CLU_012526_1_0_1"/>
<dbReference type="InParanoid" id="Q6IEZ7"/>
<dbReference type="OMA" id="VFTPITM"/>
<dbReference type="OrthoDB" id="9898717at2759"/>
<dbReference type="PAN-GO" id="Q6IEZ7">
    <property type="GO annotations" value="0 GO annotations based on evolutionary models"/>
</dbReference>
<dbReference type="PhylomeDB" id="Q6IEZ7"/>
<dbReference type="TreeFam" id="TF337295"/>
<dbReference type="PathwayCommons" id="Q6IEZ7"/>
<dbReference type="Reactome" id="R-HSA-9752946">
    <property type="pathway name" value="Expression and translocation of olfactory receptors"/>
</dbReference>
<dbReference type="BioGRID-ORCS" id="401993">
    <property type="hits" value="151 hits in 636 CRISPR screens"/>
</dbReference>
<dbReference type="GenomeRNAi" id="401993"/>
<dbReference type="Pharos" id="Q6IEZ7">
    <property type="development level" value="Tdark"/>
</dbReference>
<dbReference type="PRO" id="PR:Q6IEZ7"/>
<dbReference type="Proteomes" id="UP000005640">
    <property type="component" value="Chromosome 1"/>
</dbReference>
<dbReference type="RNAct" id="Q6IEZ7">
    <property type="molecule type" value="protein"/>
</dbReference>
<dbReference type="Bgee" id="ENSG00000203661">
    <property type="expression patterns" value="Expressed in kidney and 3 other cell types or tissues"/>
</dbReference>
<dbReference type="GO" id="GO:0005886">
    <property type="term" value="C:plasma membrane"/>
    <property type="evidence" value="ECO:0000318"/>
    <property type="project" value="GO_Central"/>
</dbReference>
<dbReference type="GO" id="GO:0004930">
    <property type="term" value="F:G protein-coupled receptor activity"/>
    <property type="evidence" value="ECO:0007669"/>
    <property type="project" value="UniProtKB-KW"/>
</dbReference>
<dbReference type="GO" id="GO:0004984">
    <property type="term" value="F:olfactory receptor activity"/>
    <property type="evidence" value="ECO:0000318"/>
    <property type="project" value="GO_Central"/>
</dbReference>
<dbReference type="GO" id="GO:0050911">
    <property type="term" value="P:detection of chemical stimulus involved in sensory perception of smell"/>
    <property type="evidence" value="ECO:0000318"/>
    <property type="project" value="GO_Central"/>
</dbReference>
<dbReference type="CDD" id="cd15421">
    <property type="entry name" value="7tmA_OR2T-like"/>
    <property type="match status" value="1"/>
</dbReference>
<dbReference type="FunFam" id="1.10.1220.70:FF:000001">
    <property type="entry name" value="Olfactory receptor"/>
    <property type="match status" value="1"/>
</dbReference>
<dbReference type="FunFam" id="1.20.1070.10:FF:000008">
    <property type="entry name" value="Olfactory receptor"/>
    <property type="match status" value="1"/>
</dbReference>
<dbReference type="Gene3D" id="1.20.1070.10">
    <property type="entry name" value="Rhodopsin 7-helix transmembrane proteins"/>
    <property type="match status" value="1"/>
</dbReference>
<dbReference type="InterPro" id="IPR000276">
    <property type="entry name" value="GPCR_Rhodpsn"/>
</dbReference>
<dbReference type="InterPro" id="IPR017452">
    <property type="entry name" value="GPCR_Rhodpsn_7TM"/>
</dbReference>
<dbReference type="InterPro" id="IPR000725">
    <property type="entry name" value="Olfact_rcpt"/>
</dbReference>
<dbReference type="PANTHER" id="PTHR26453">
    <property type="entry name" value="OLFACTORY RECEPTOR"/>
    <property type="match status" value="1"/>
</dbReference>
<dbReference type="Pfam" id="PF13853">
    <property type="entry name" value="7tm_4"/>
    <property type="match status" value="1"/>
</dbReference>
<dbReference type="PRINTS" id="PR00237">
    <property type="entry name" value="GPCRRHODOPSN"/>
</dbReference>
<dbReference type="PRINTS" id="PR00245">
    <property type="entry name" value="OLFACTORYR"/>
</dbReference>
<dbReference type="SUPFAM" id="SSF81321">
    <property type="entry name" value="Family A G protein-coupled receptor-like"/>
    <property type="match status" value="1"/>
</dbReference>
<dbReference type="PROSITE" id="PS00237">
    <property type="entry name" value="G_PROTEIN_RECEP_F1_1"/>
    <property type="match status" value="1"/>
</dbReference>
<dbReference type="PROSITE" id="PS50262">
    <property type="entry name" value="G_PROTEIN_RECEP_F1_2"/>
    <property type="match status" value="1"/>
</dbReference>
<organism>
    <name type="scientific">Homo sapiens</name>
    <name type="common">Human</name>
    <dbReference type="NCBI Taxonomy" id="9606"/>
    <lineage>
        <taxon>Eukaryota</taxon>
        <taxon>Metazoa</taxon>
        <taxon>Chordata</taxon>
        <taxon>Craniata</taxon>
        <taxon>Vertebrata</taxon>
        <taxon>Euteleostomi</taxon>
        <taxon>Mammalia</taxon>
        <taxon>Eutheria</taxon>
        <taxon>Euarchontoglires</taxon>
        <taxon>Primates</taxon>
        <taxon>Haplorrhini</taxon>
        <taxon>Catarrhini</taxon>
        <taxon>Hominidae</taxon>
        <taxon>Homo</taxon>
    </lineage>
</organism>
<feature type="chain" id="PRO_0000150500" description="Olfactory receptor 2T5">
    <location>
        <begin position="1"/>
        <end position="315"/>
    </location>
</feature>
<feature type="topological domain" description="Extracellular" evidence="1">
    <location>
        <begin position="1"/>
        <end position="29"/>
    </location>
</feature>
<feature type="transmembrane region" description="Helical; Name=1" evidence="1">
    <location>
        <begin position="30"/>
        <end position="53"/>
    </location>
</feature>
<feature type="topological domain" description="Cytoplasmic" evidence="1">
    <location>
        <begin position="54"/>
        <end position="61"/>
    </location>
</feature>
<feature type="transmembrane region" description="Helical; Name=2" evidence="1">
    <location>
        <begin position="62"/>
        <end position="83"/>
    </location>
</feature>
<feature type="topological domain" description="Extracellular" evidence="1">
    <location>
        <begin position="84"/>
        <end position="104"/>
    </location>
</feature>
<feature type="transmembrane region" description="Helical; Name=3" evidence="1">
    <location>
        <begin position="105"/>
        <end position="124"/>
    </location>
</feature>
<feature type="topological domain" description="Cytoplasmic" evidence="1">
    <location>
        <begin position="125"/>
        <end position="143"/>
    </location>
</feature>
<feature type="transmembrane region" description="Helical; Name=4" evidence="1">
    <location>
        <begin position="144"/>
        <end position="162"/>
    </location>
</feature>
<feature type="topological domain" description="Extracellular" evidence="1">
    <location>
        <begin position="163"/>
        <end position="199"/>
    </location>
</feature>
<feature type="transmembrane region" description="Helical; Name=5" evidence="1">
    <location>
        <begin position="200"/>
        <end position="223"/>
    </location>
</feature>
<feature type="topological domain" description="Cytoplasmic" evidence="1">
    <location>
        <begin position="224"/>
        <end position="240"/>
    </location>
</feature>
<feature type="transmembrane region" description="Helical; Name=6" evidence="1">
    <location>
        <begin position="241"/>
        <end position="263"/>
    </location>
</feature>
<feature type="topological domain" description="Extracellular" evidence="1">
    <location>
        <begin position="264"/>
        <end position="276"/>
    </location>
</feature>
<feature type="transmembrane region" description="Helical; Name=7" evidence="1">
    <location>
        <begin position="277"/>
        <end position="296"/>
    </location>
</feature>
<feature type="topological domain" description="Cytoplasmic" evidence="1">
    <location>
        <begin position="297"/>
        <end position="315"/>
    </location>
</feature>
<feature type="glycosylation site" description="N-linked (GlcNAc...) asparagine" evidence="1">
    <location>
        <position position="3"/>
    </location>
</feature>
<feature type="glycosylation site" description="N-linked (GlcNAc...) asparagine" evidence="1">
    <location>
        <position position="9"/>
    </location>
</feature>
<feature type="disulfide bond" evidence="2">
    <location>
        <begin position="101"/>
        <end position="193"/>
    </location>
</feature>
<feature type="sequence variant" id="VAR_080453" description="In dbSNP:rs1770043." evidence="3 4">
    <original>K</original>
    <variation>R</variation>
    <location>
        <position position="13"/>
    </location>
</feature>
<sequence length="315" mass="35595">MANITRMANHTGKLDFILMGLFRRSKHPALLSVVIFVVFLKALSGNAVLILLIHCDAHLHSPMYFFISQLSLMDMAYISVTVPKMLLDQVMGVNKVSAPECGMQMFLYLTLAGSEFFLLATMAYDRYVAICHPLRYPVLMNHRVCLFLASGCWFLGSVDGFMLTPITMSFPFCRSWEIHHFFCEVPAVTILSCSDTSLYETLMYLCCVLMLLIPVTIISSSYLLILLTVHRMNSAEGRKKAFATCSSHLTVVILFYGAAVYTYMLPSSYHTPEKDMMVSVFYTILTPVLNPLIYSLRNKDVMGALKKMLTVRFVL</sequence>
<name>OR2T5_HUMAN</name>
<keyword id="KW-1003">Cell membrane</keyword>
<keyword id="KW-1015">Disulfide bond</keyword>
<keyword id="KW-0297">G-protein coupled receptor</keyword>
<keyword id="KW-0325">Glycoprotein</keyword>
<keyword id="KW-0472">Membrane</keyword>
<keyword id="KW-0552">Olfaction</keyword>
<keyword id="KW-0675">Receptor</keyword>
<keyword id="KW-1185">Reference proteome</keyword>
<keyword id="KW-0716">Sensory transduction</keyword>
<keyword id="KW-0807">Transducer</keyword>
<keyword id="KW-0812">Transmembrane</keyword>
<keyword id="KW-1133">Transmembrane helix</keyword>
<accession>Q6IEZ7</accession>
<accession>B9EIN2</accession>
<proteinExistence type="evidence at transcript level"/>
<protein>
    <recommendedName>
        <fullName>Olfactory receptor 2T5</fullName>
    </recommendedName>
    <alternativeName>
        <fullName>Olfactory receptor OR1-62</fullName>
    </alternativeName>
</protein>